<name>AZOR_VIBPA</name>
<evidence type="ECO:0000255" key="1">
    <source>
        <dbReference type="HAMAP-Rule" id="MF_01216"/>
    </source>
</evidence>
<keyword id="KW-0285">Flavoprotein</keyword>
<keyword id="KW-0288">FMN</keyword>
<keyword id="KW-0520">NAD</keyword>
<keyword id="KW-0560">Oxidoreductase</keyword>
<organism>
    <name type="scientific">Vibrio parahaemolyticus serotype O3:K6 (strain RIMD 2210633)</name>
    <dbReference type="NCBI Taxonomy" id="223926"/>
    <lineage>
        <taxon>Bacteria</taxon>
        <taxon>Pseudomonadati</taxon>
        <taxon>Pseudomonadota</taxon>
        <taxon>Gammaproteobacteria</taxon>
        <taxon>Vibrionales</taxon>
        <taxon>Vibrionaceae</taxon>
        <taxon>Vibrio</taxon>
    </lineage>
</organism>
<reference key="1">
    <citation type="journal article" date="2003" name="Lancet">
        <title>Genome sequence of Vibrio parahaemolyticus: a pathogenic mechanism distinct from that of V. cholerae.</title>
        <authorList>
            <person name="Makino K."/>
            <person name="Oshima K."/>
            <person name="Kurokawa K."/>
            <person name="Yokoyama K."/>
            <person name="Uda T."/>
            <person name="Tagomori K."/>
            <person name="Iijima Y."/>
            <person name="Najima M."/>
            <person name="Nakano M."/>
            <person name="Yamashita A."/>
            <person name="Kubota Y."/>
            <person name="Kimura S."/>
            <person name="Yasunaga T."/>
            <person name="Honda T."/>
            <person name="Shinagawa H."/>
            <person name="Hattori M."/>
            <person name="Iida T."/>
        </authorList>
    </citation>
    <scope>NUCLEOTIDE SEQUENCE [LARGE SCALE GENOMIC DNA]</scope>
    <source>
        <strain>RIMD 2210633</strain>
    </source>
</reference>
<comment type="function">
    <text evidence="1">Quinone reductase that provides resistance to thiol-specific stress caused by electrophilic quinones.</text>
</comment>
<comment type="function">
    <text evidence="1">Also exhibits azoreductase activity. Catalyzes the reductive cleavage of the azo bond in aromatic azo compounds to the corresponding amines.</text>
</comment>
<comment type="catalytic activity">
    <reaction evidence="1">
        <text>2 a quinone + NADH + H(+) = 2 a 1,4-benzosemiquinone + NAD(+)</text>
        <dbReference type="Rhea" id="RHEA:65952"/>
        <dbReference type="ChEBI" id="CHEBI:15378"/>
        <dbReference type="ChEBI" id="CHEBI:57540"/>
        <dbReference type="ChEBI" id="CHEBI:57945"/>
        <dbReference type="ChEBI" id="CHEBI:132124"/>
        <dbReference type="ChEBI" id="CHEBI:134225"/>
    </reaction>
</comment>
<comment type="catalytic activity">
    <reaction evidence="1">
        <text>N,N-dimethyl-1,4-phenylenediamine + anthranilate + 2 NAD(+) = 2-(4-dimethylaminophenyl)diazenylbenzoate + 2 NADH + 2 H(+)</text>
        <dbReference type="Rhea" id="RHEA:55872"/>
        <dbReference type="ChEBI" id="CHEBI:15378"/>
        <dbReference type="ChEBI" id="CHEBI:15783"/>
        <dbReference type="ChEBI" id="CHEBI:16567"/>
        <dbReference type="ChEBI" id="CHEBI:57540"/>
        <dbReference type="ChEBI" id="CHEBI:57945"/>
        <dbReference type="ChEBI" id="CHEBI:71579"/>
        <dbReference type="EC" id="1.7.1.17"/>
    </reaction>
</comment>
<comment type="cofactor">
    <cofactor evidence="1">
        <name>FMN</name>
        <dbReference type="ChEBI" id="CHEBI:58210"/>
    </cofactor>
    <text evidence="1">Binds 1 FMN per subunit.</text>
</comment>
<comment type="subunit">
    <text evidence="1">Homodimer.</text>
</comment>
<comment type="similarity">
    <text evidence="1">Belongs to the azoreductase type 1 family.</text>
</comment>
<feature type="chain" id="PRO_0000166361" description="FMN-dependent NADH:quinone oxidoreductase">
    <location>
        <begin position="1"/>
        <end position="194"/>
    </location>
</feature>
<feature type="binding site" evidence="1">
    <location>
        <position position="10"/>
    </location>
    <ligand>
        <name>FMN</name>
        <dbReference type="ChEBI" id="CHEBI:58210"/>
    </ligand>
</feature>
<feature type="binding site" evidence="1">
    <location>
        <begin position="16"/>
        <end position="18"/>
    </location>
    <ligand>
        <name>FMN</name>
        <dbReference type="ChEBI" id="CHEBI:58210"/>
    </ligand>
</feature>
<feature type="binding site" evidence="1">
    <location>
        <begin position="91"/>
        <end position="94"/>
    </location>
    <ligand>
        <name>FMN</name>
        <dbReference type="ChEBI" id="CHEBI:58210"/>
    </ligand>
</feature>
<feature type="binding site" evidence="1">
    <location>
        <begin position="135"/>
        <end position="138"/>
    </location>
    <ligand>
        <name>FMN</name>
        <dbReference type="ChEBI" id="CHEBI:58210"/>
    </ligand>
</feature>
<protein>
    <recommendedName>
        <fullName evidence="1">FMN-dependent NADH:quinone oxidoreductase</fullName>
        <ecNumber evidence="1">1.6.5.-</ecNumber>
    </recommendedName>
    <alternativeName>
        <fullName evidence="1">Azo-dye reductase</fullName>
    </alternativeName>
    <alternativeName>
        <fullName evidence="1">FMN-dependent NADH-azo compound oxidoreductase</fullName>
    </alternativeName>
    <alternativeName>
        <fullName evidence="1">FMN-dependent NADH-azoreductase</fullName>
        <ecNumber evidence="1">1.7.1.17</ecNumber>
    </alternativeName>
</protein>
<dbReference type="EC" id="1.6.5.-" evidence="1"/>
<dbReference type="EC" id="1.7.1.17" evidence="1"/>
<dbReference type="EMBL" id="BA000031">
    <property type="protein sequence ID" value="BAC59715.1"/>
    <property type="molecule type" value="Genomic_DNA"/>
</dbReference>
<dbReference type="RefSeq" id="NP_797831.1">
    <property type="nucleotide sequence ID" value="NC_004603.1"/>
</dbReference>
<dbReference type="RefSeq" id="WP_005483453.1">
    <property type="nucleotide sequence ID" value="NC_004603.1"/>
</dbReference>
<dbReference type="SMR" id="Q87PP9"/>
<dbReference type="GeneID" id="1188959"/>
<dbReference type="KEGG" id="vpa:VP1452"/>
<dbReference type="PATRIC" id="fig|223926.6.peg.1388"/>
<dbReference type="eggNOG" id="COG1182">
    <property type="taxonomic scope" value="Bacteria"/>
</dbReference>
<dbReference type="HOGENOM" id="CLU_088964_0_0_6"/>
<dbReference type="Proteomes" id="UP000002493">
    <property type="component" value="Chromosome 1"/>
</dbReference>
<dbReference type="GO" id="GO:0009055">
    <property type="term" value="F:electron transfer activity"/>
    <property type="evidence" value="ECO:0007669"/>
    <property type="project" value="UniProtKB-UniRule"/>
</dbReference>
<dbReference type="GO" id="GO:0010181">
    <property type="term" value="F:FMN binding"/>
    <property type="evidence" value="ECO:0007669"/>
    <property type="project" value="UniProtKB-UniRule"/>
</dbReference>
<dbReference type="GO" id="GO:0016652">
    <property type="term" value="F:oxidoreductase activity, acting on NAD(P)H as acceptor"/>
    <property type="evidence" value="ECO:0007669"/>
    <property type="project" value="UniProtKB-UniRule"/>
</dbReference>
<dbReference type="GO" id="GO:0016655">
    <property type="term" value="F:oxidoreductase activity, acting on NAD(P)H, quinone or similar compound as acceptor"/>
    <property type="evidence" value="ECO:0007669"/>
    <property type="project" value="InterPro"/>
</dbReference>
<dbReference type="Gene3D" id="3.40.50.360">
    <property type="match status" value="1"/>
</dbReference>
<dbReference type="HAMAP" id="MF_01216">
    <property type="entry name" value="Azoreductase_type1"/>
    <property type="match status" value="1"/>
</dbReference>
<dbReference type="InterPro" id="IPR003680">
    <property type="entry name" value="Flavodoxin_fold"/>
</dbReference>
<dbReference type="InterPro" id="IPR029039">
    <property type="entry name" value="Flavoprotein-like_sf"/>
</dbReference>
<dbReference type="InterPro" id="IPR050104">
    <property type="entry name" value="FMN-dep_NADH:Q_OxRdtase_AzoR1"/>
</dbReference>
<dbReference type="InterPro" id="IPR023048">
    <property type="entry name" value="NADH:quinone_OxRdtase_FMN_depd"/>
</dbReference>
<dbReference type="PANTHER" id="PTHR43741">
    <property type="entry name" value="FMN-DEPENDENT NADH-AZOREDUCTASE 1"/>
    <property type="match status" value="1"/>
</dbReference>
<dbReference type="PANTHER" id="PTHR43741:SF2">
    <property type="entry name" value="FMN-DEPENDENT NADH:QUINONE OXIDOREDUCTASE"/>
    <property type="match status" value="1"/>
</dbReference>
<dbReference type="Pfam" id="PF02525">
    <property type="entry name" value="Flavodoxin_2"/>
    <property type="match status" value="1"/>
</dbReference>
<dbReference type="SUPFAM" id="SSF52218">
    <property type="entry name" value="Flavoproteins"/>
    <property type="match status" value="1"/>
</dbReference>
<accession>Q87PP9</accession>
<sequence>MSRVLALKSSILGDYSQSNKLVEDFIKNVDQDKLTVRDLAANPLPVLDFAVATALRATEDLSQEQQAVVDLSDTLIEEVKAADTLVIAAPMYNFTIPTQLKNWIDLIARAGVTFKYTENGVQGLIEGKKAIVVTTRGGIHKDSPTDNVTPYLRTVLGFVGITDVEFIYAEALNMGEDAASKGISDAQSQLATMA</sequence>
<gene>
    <name evidence="1" type="primary">azoR</name>
    <name type="ordered locus">VP1452</name>
</gene>
<proteinExistence type="inferred from homology"/>